<comment type="function">
    <text evidence="1">Specifically methylates the uridine in position 2552 of 23S rRNA at the 2'-O position of the ribose in the fully assembled 50S ribosomal subunit.</text>
</comment>
<comment type="catalytic activity">
    <reaction evidence="1">
        <text>uridine(2552) in 23S rRNA + S-adenosyl-L-methionine = 2'-O-methyluridine(2552) in 23S rRNA + S-adenosyl-L-homocysteine + H(+)</text>
        <dbReference type="Rhea" id="RHEA:42720"/>
        <dbReference type="Rhea" id="RHEA-COMP:10202"/>
        <dbReference type="Rhea" id="RHEA-COMP:10203"/>
        <dbReference type="ChEBI" id="CHEBI:15378"/>
        <dbReference type="ChEBI" id="CHEBI:57856"/>
        <dbReference type="ChEBI" id="CHEBI:59789"/>
        <dbReference type="ChEBI" id="CHEBI:65315"/>
        <dbReference type="ChEBI" id="CHEBI:74478"/>
        <dbReference type="EC" id="2.1.1.166"/>
    </reaction>
</comment>
<comment type="subcellular location">
    <subcellularLocation>
        <location evidence="1">Cytoplasm</location>
    </subcellularLocation>
</comment>
<comment type="similarity">
    <text evidence="1">Belongs to the class I-like SAM-binding methyltransferase superfamily. RNA methyltransferase RlmE family.</text>
</comment>
<dbReference type="EC" id="2.1.1.166" evidence="1"/>
<dbReference type="EMBL" id="AM747720">
    <property type="protein sequence ID" value="CAR51568.1"/>
    <property type="molecule type" value="Genomic_DNA"/>
</dbReference>
<dbReference type="RefSeq" id="WP_006476343.1">
    <property type="nucleotide sequence ID" value="NC_011000.1"/>
</dbReference>
<dbReference type="SMR" id="B4E5F3"/>
<dbReference type="KEGG" id="bcj:BCAL1266"/>
<dbReference type="eggNOG" id="COG0293">
    <property type="taxonomic scope" value="Bacteria"/>
</dbReference>
<dbReference type="HOGENOM" id="CLU_009422_4_1_4"/>
<dbReference type="BioCyc" id="BCEN216591:G1G1V-1405-MONOMER"/>
<dbReference type="Proteomes" id="UP000001035">
    <property type="component" value="Chromosome 1"/>
</dbReference>
<dbReference type="GO" id="GO:0005737">
    <property type="term" value="C:cytoplasm"/>
    <property type="evidence" value="ECO:0007669"/>
    <property type="project" value="UniProtKB-SubCell"/>
</dbReference>
<dbReference type="GO" id="GO:0008650">
    <property type="term" value="F:rRNA (uridine-2'-O-)-methyltransferase activity"/>
    <property type="evidence" value="ECO:0007669"/>
    <property type="project" value="UniProtKB-UniRule"/>
</dbReference>
<dbReference type="FunFam" id="3.40.50.150:FF:000005">
    <property type="entry name" value="Ribosomal RNA large subunit methyltransferase E"/>
    <property type="match status" value="1"/>
</dbReference>
<dbReference type="Gene3D" id="3.40.50.150">
    <property type="entry name" value="Vaccinia Virus protein VP39"/>
    <property type="match status" value="1"/>
</dbReference>
<dbReference type="HAMAP" id="MF_01547">
    <property type="entry name" value="RNA_methyltr_E"/>
    <property type="match status" value="1"/>
</dbReference>
<dbReference type="InterPro" id="IPR050082">
    <property type="entry name" value="RNA_methyltr_RlmE"/>
</dbReference>
<dbReference type="InterPro" id="IPR002877">
    <property type="entry name" value="RNA_MeTrfase_FtsJ_dom"/>
</dbReference>
<dbReference type="InterPro" id="IPR015507">
    <property type="entry name" value="rRNA-MeTfrase_E"/>
</dbReference>
<dbReference type="InterPro" id="IPR029063">
    <property type="entry name" value="SAM-dependent_MTases_sf"/>
</dbReference>
<dbReference type="PANTHER" id="PTHR10920">
    <property type="entry name" value="RIBOSOMAL RNA METHYLTRANSFERASE"/>
    <property type="match status" value="1"/>
</dbReference>
<dbReference type="PANTHER" id="PTHR10920:SF18">
    <property type="entry name" value="RRNA METHYLTRANSFERASE 2, MITOCHONDRIAL"/>
    <property type="match status" value="1"/>
</dbReference>
<dbReference type="Pfam" id="PF01728">
    <property type="entry name" value="FtsJ"/>
    <property type="match status" value="1"/>
</dbReference>
<dbReference type="PIRSF" id="PIRSF005461">
    <property type="entry name" value="23S_rRNA_mtase"/>
    <property type="match status" value="1"/>
</dbReference>
<dbReference type="SUPFAM" id="SSF53335">
    <property type="entry name" value="S-adenosyl-L-methionine-dependent methyltransferases"/>
    <property type="match status" value="1"/>
</dbReference>
<proteinExistence type="inferred from homology"/>
<organism>
    <name type="scientific">Burkholderia cenocepacia (strain ATCC BAA-245 / DSM 16553 / LMG 16656 / NCTC 13227 / J2315 / CF5610)</name>
    <name type="common">Burkholderia cepacia (strain J2315)</name>
    <dbReference type="NCBI Taxonomy" id="216591"/>
    <lineage>
        <taxon>Bacteria</taxon>
        <taxon>Pseudomonadati</taxon>
        <taxon>Pseudomonadota</taxon>
        <taxon>Betaproteobacteria</taxon>
        <taxon>Burkholderiales</taxon>
        <taxon>Burkholderiaceae</taxon>
        <taxon>Burkholderia</taxon>
        <taxon>Burkholderia cepacia complex</taxon>
    </lineage>
</organism>
<gene>
    <name evidence="1" type="primary">rlmE</name>
    <name evidence="1" type="synonym">ftsJ</name>
    <name evidence="1" type="synonym">rrmJ</name>
    <name type="ordered locus">BceJ2315_12400</name>
    <name type="ORF">BCAL1266</name>
</gene>
<name>RLME_BURCJ</name>
<evidence type="ECO:0000255" key="1">
    <source>
        <dbReference type="HAMAP-Rule" id="MF_01547"/>
    </source>
</evidence>
<evidence type="ECO:0000256" key="2">
    <source>
        <dbReference type="SAM" id="MobiDB-lite"/>
    </source>
</evidence>
<reference key="1">
    <citation type="journal article" date="2009" name="J. Bacteriol.">
        <title>The genome of Burkholderia cenocepacia J2315, an epidemic pathogen of cystic fibrosis patients.</title>
        <authorList>
            <person name="Holden M.T."/>
            <person name="Seth-Smith H.M."/>
            <person name="Crossman L.C."/>
            <person name="Sebaihia M."/>
            <person name="Bentley S.D."/>
            <person name="Cerdeno-Tarraga A.M."/>
            <person name="Thomson N.R."/>
            <person name="Bason N."/>
            <person name="Quail M.A."/>
            <person name="Sharp S."/>
            <person name="Cherevach I."/>
            <person name="Churcher C."/>
            <person name="Goodhead I."/>
            <person name="Hauser H."/>
            <person name="Holroyd N."/>
            <person name="Mungall K."/>
            <person name="Scott P."/>
            <person name="Walker D."/>
            <person name="White B."/>
            <person name="Rose H."/>
            <person name="Iversen P."/>
            <person name="Mil-Homens D."/>
            <person name="Rocha E.P."/>
            <person name="Fialho A.M."/>
            <person name="Baldwin A."/>
            <person name="Dowson C."/>
            <person name="Barrell B.G."/>
            <person name="Govan J.R."/>
            <person name="Vandamme P."/>
            <person name="Hart C.A."/>
            <person name="Mahenthiralingam E."/>
            <person name="Parkhill J."/>
        </authorList>
    </citation>
    <scope>NUCLEOTIDE SEQUENCE [LARGE SCALE GENOMIC DNA]</scope>
    <source>
        <strain>ATCC BAA-245 / DSM 16553 / LMG 16656 / NCTC 13227 / J2315 / CF5610</strain>
    </source>
</reference>
<accession>B4E5F3</accession>
<sequence length="220" mass="24787">MAKNRFNQHWLHDHINDPYVKMAQREGYRARAAYKLKEIDEQDKLIRPGQVIVDLGATPGSWSQYARNKLAQGKKRDAEREGGIDGTIVALDILPMEPIADVHFLQGDFREDDVLHQLEEVLEGRAVDLVISDMAPNLSGVASADAARIEHLCDLALEFAQNHLKPDGALLVKCFHGSGYSQIVEKFKQQFKVVAPRKPKASRDKSSETFILGRQLKHPR</sequence>
<keyword id="KW-0963">Cytoplasm</keyword>
<keyword id="KW-0489">Methyltransferase</keyword>
<keyword id="KW-0698">rRNA processing</keyword>
<keyword id="KW-0949">S-adenosyl-L-methionine</keyword>
<keyword id="KW-0808">Transferase</keyword>
<feature type="chain" id="PRO_1000194980" description="Ribosomal RNA large subunit methyltransferase E">
    <location>
        <begin position="1"/>
        <end position="220"/>
    </location>
</feature>
<feature type="region of interest" description="Disordered" evidence="2">
    <location>
        <begin position="198"/>
        <end position="220"/>
    </location>
</feature>
<feature type="active site" description="Proton acceptor" evidence="1">
    <location>
        <position position="173"/>
    </location>
</feature>
<feature type="binding site" evidence="1">
    <location>
        <position position="60"/>
    </location>
    <ligand>
        <name>S-adenosyl-L-methionine</name>
        <dbReference type="ChEBI" id="CHEBI:59789"/>
    </ligand>
</feature>
<feature type="binding site" evidence="1">
    <location>
        <position position="62"/>
    </location>
    <ligand>
        <name>S-adenosyl-L-methionine</name>
        <dbReference type="ChEBI" id="CHEBI:59789"/>
    </ligand>
</feature>
<feature type="binding site" evidence="1">
    <location>
        <position position="92"/>
    </location>
    <ligand>
        <name>S-adenosyl-L-methionine</name>
        <dbReference type="ChEBI" id="CHEBI:59789"/>
    </ligand>
</feature>
<feature type="binding site" evidence="1">
    <location>
        <position position="108"/>
    </location>
    <ligand>
        <name>S-adenosyl-L-methionine</name>
        <dbReference type="ChEBI" id="CHEBI:59789"/>
    </ligand>
</feature>
<feature type="binding site" evidence="1">
    <location>
        <position position="133"/>
    </location>
    <ligand>
        <name>S-adenosyl-L-methionine</name>
        <dbReference type="ChEBI" id="CHEBI:59789"/>
    </ligand>
</feature>
<protein>
    <recommendedName>
        <fullName evidence="1">Ribosomal RNA large subunit methyltransferase E</fullName>
        <ecNumber evidence="1">2.1.1.166</ecNumber>
    </recommendedName>
    <alternativeName>
        <fullName evidence="1">23S rRNA Um2552 methyltransferase</fullName>
    </alternativeName>
    <alternativeName>
        <fullName evidence="1">rRNA (uridine-2'-O-)-methyltransferase</fullName>
    </alternativeName>
</protein>